<gene>
    <name type="primary">CHI</name>
</gene>
<comment type="function">
    <text evidence="1">Catalyzes the intramolecular cyclization of bicyclic chalcones into tricyclic (S)-flavanones. Responsible for the isomerization of 4,2',4',6'-tetrahydroxychalcone (also termed chalcone) into naringenin (By similarity).</text>
</comment>
<comment type="catalytic activity">
    <reaction>
        <text>a chalcone = a flavanone.</text>
        <dbReference type="EC" id="5.5.1.6"/>
    </reaction>
</comment>
<comment type="pathway">
    <text>Secondary metabolite biosynthesis; flavonoid biosynthesis.</text>
</comment>
<comment type="miscellaneous">
    <text>Part of the biosynthetic pathway for all classes of flavonoids, a large class of secondary plant metabolites, many of which are brightly colored.</text>
</comment>
<comment type="similarity">
    <text evidence="2">Belongs to the chalcone isomerase family.</text>
</comment>
<keyword id="KW-0284">Flavonoid biosynthesis</keyword>
<keyword id="KW-0413">Isomerase</keyword>
<organism>
    <name type="scientific">Ipomoea batatas</name>
    <name type="common">Sweet potato</name>
    <name type="synonym">Convolvulus batatas</name>
    <dbReference type="NCBI Taxonomy" id="4120"/>
    <lineage>
        <taxon>Eukaryota</taxon>
        <taxon>Viridiplantae</taxon>
        <taxon>Streptophyta</taxon>
        <taxon>Embryophyta</taxon>
        <taxon>Tracheophyta</taxon>
        <taxon>Spermatophyta</taxon>
        <taxon>Magnoliopsida</taxon>
        <taxon>eudicotyledons</taxon>
        <taxon>Gunneridae</taxon>
        <taxon>Pentapetalae</taxon>
        <taxon>asterids</taxon>
        <taxon>lamiids</taxon>
        <taxon>Solanales</taxon>
        <taxon>Convolvulaceae</taxon>
        <taxon>Ipomoeeae</taxon>
        <taxon>Ipomoea</taxon>
    </lineage>
</organism>
<sequence>MSAPPCVAEVKVESYVFPATAKPPGTAKTLILGGAGARGLNIDGKFVKFTAIGVYLEADAVPSLAVKWNGKSAEELTDSVQFFRDIVTGPFEKLTRITMILPLSGKQYSEKVSENCVAFWKAAGMYGDAESKAIEKFNDVFSDQMFPPGASIFFTQSPHGSLTISFSKEGSMPEIASAVIENKPLSEAVLESIIGSKGVSPEAKQSLAVRLSELFKNGVNGGDAITGKVGCENDAIPQTVVSK</sequence>
<accession>Q8S911</accession>
<feature type="chain" id="PRO_0000300840" description="Chalcone--flavanone isomerase">
    <location>
        <begin position="1"/>
        <end position="243"/>
    </location>
</feature>
<feature type="binding site" evidence="1">
    <location>
        <position position="50"/>
    </location>
    <ligand>
        <name>substrate</name>
    </ligand>
</feature>
<feature type="binding site" evidence="1">
    <location>
        <position position="115"/>
    </location>
    <ligand>
        <name>substrate</name>
    </ligand>
</feature>
<feature type="binding site" evidence="1">
    <location>
        <position position="192"/>
    </location>
    <ligand>
        <name>substrate</name>
    </ligand>
</feature>
<feature type="site" description="Important for catalytic activity" evidence="1">
    <location>
        <position position="108"/>
    </location>
</feature>
<reference key="1">
    <citation type="submission" date="2002-03" db="EMBL/GenBank/DDBJ databases">
        <title>Ipomoea batatas chi mRNA for chalcone isomerase, complete cds.</title>
        <authorList>
            <person name="Kikuchi Y."/>
            <person name="Morita H."/>
            <person name="Shiokawa K."/>
            <person name="Noguchi H."/>
        </authorList>
    </citation>
    <scope>NUCLEOTIDE SEQUENCE [MRNA]</scope>
</reference>
<proteinExistence type="evidence at transcript level"/>
<protein>
    <recommendedName>
        <fullName>Chalcone--flavanone isomerase</fullName>
        <shortName>Chalcone isomerase</shortName>
        <ecNumber>5.5.1.6</ecNumber>
    </recommendedName>
</protein>
<evidence type="ECO:0000250" key="1"/>
<evidence type="ECO:0000305" key="2"/>
<name>CFI_IPOBA</name>
<dbReference type="EC" id="5.5.1.6"/>
<dbReference type="EMBL" id="AB080768">
    <property type="protein sequence ID" value="BAB85838.1"/>
    <property type="molecule type" value="mRNA"/>
</dbReference>
<dbReference type="SMR" id="Q8S911"/>
<dbReference type="UniPathway" id="UPA00154"/>
<dbReference type="GO" id="GO:0045430">
    <property type="term" value="F:chalcone isomerase activity"/>
    <property type="evidence" value="ECO:0007669"/>
    <property type="project" value="UniProtKB-EC"/>
</dbReference>
<dbReference type="GO" id="GO:0009813">
    <property type="term" value="P:flavonoid biosynthetic process"/>
    <property type="evidence" value="ECO:0007669"/>
    <property type="project" value="UniProtKB-UniPathway"/>
</dbReference>
<dbReference type="Gene3D" id="1.10.890.20">
    <property type="match status" value="1"/>
</dbReference>
<dbReference type="Gene3D" id="3.50.70.10">
    <property type="match status" value="1"/>
</dbReference>
<dbReference type="InterPro" id="IPR044164">
    <property type="entry name" value="CFI"/>
</dbReference>
<dbReference type="InterPro" id="IPR016087">
    <property type="entry name" value="Chalcone_isomerase"/>
</dbReference>
<dbReference type="InterPro" id="IPR016088">
    <property type="entry name" value="Chalcone_isomerase_3-sand"/>
</dbReference>
<dbReference type="InterPro" id="IPR016089">
    <property type="entry name" value="Chalcone_isomerase_bundle_sf"/>
</dbReference>
<dbReference type="InterPro" id="IPR036298">
    <property type="entry name" value="Chalcone_isomerase_sf"/>
</dbReference>
<dbReference type="PANTHER" id="PTHR28039:SF8">
    <property type="entry name" value="CHALCONE--FLAVANONE ISOMERASE 1-RELATED"/>
    <property type="match status" value="1"/>
</dbReference>
<dbReference type="PANTHER" id="PTHR28039">
    <property type="entry name" value="CHALCONE--FLAVONONE ISOMERASE 1-RELATED"/>
    <property type="match status" value="1"/>
</dbReference>
<dbReference type="Pfam" id="PF02431">
    <property type="entry name" value="Chalcone"/>
    <property type="match status" value="1"/>
</dbReference>
<dbReference type="SUPFAM" id="SSF54626">
    <property type="entry name" value="Chalcone isomerase"/>
    <property type="match status" value="1"/>
</dbReference>